<protein>
    <recommendedName>
        <fullName evidence="1">Alkanesulfonate monooxygenase</fullName>
        <ecNumber evidence="1">1.14.14.5</ecNumber>
    </recommendedName>
    <alternativeName>
        <fullName evidence="1">FMNH2-dependent aliphatic sulfonate monooxygenase</fullName>
    </alternativeName>
</protein>
<reference key="1">
    <citation type="journal article" date="2006" name="J. Bacteriol.">
        <title>Complete genome sequence of Yersinia pestis strains Antiqua and Nepal516: evidence of gene reduction in an emerging pathogen.</title>
        <authorList>
            <person name="Chain P.S.G."/>
            <person name="Hu P."/>
            <person name="Malfatti S.A."/>
            <person name="Radnedge L."/>
            <person name="Larimer F."/>
            <person name="Vergez L.M."/>
            <person name="Worsham P."/>
            <person name="Chu M.C."/>
            <person name="Andersen G.L."/>
        </authorList>
    </citation>
    <scope>NUCLEOTIDE SEQUENCE [LARGE SCALE GENOMIC DNA]</scope>
    <source>
        <strain>Nepal516</strain>
    </source>
</reference>
<reference key="2">
    <citation type="submission" date="2009-04" db="EMBL/GenBank/DDBJ databases">
        <title>Yersinia pestis Nepal516A whole genome shotgun sequencing project.</title>
        <authorList>
            <person name="Plunkett G. III"/>
            <person name="Anderson B.D."/>
            <person name="Baumler D.J."/>
            <person name="Burland V."/>
            <person name="Cabot E.L."/>
            <person name="Glasner J.D."/>
            <person name="Mau B."/>
            <person name="Neeno-Eckwall E."/>
            <person name="Perna N.T."/>
            <person name="Munk A.C."/>
            <person name="Tapia R."/>
            <person name="Green L.D."/>
            <person name="Rogers Y.C."/>
            <person name="Detter J.C."/>
            <person name="Bruce D.C."/>
            <person name="Brettin T.S."/>
        </authorList>
    </citation>
    <scope>NUCLEOTIDE SEQUENCE [LARGE SCALE GENOMIC DNA]</scope>
    <source>
        <strain>Nepal516</strain>
    </source>
</reference>
<name>SSUD_YERPN</name>
<sequence>MSINVFWFLPTHGDGHYLGSSEGARAVDYSYLQQIAQAADRLGFGGVLIPTGRSCEDSWLVAASLIPVTQRLKFLVALRPGIISPTLAARQAATLDRLSNGRALFNLVTGGDPEELAAEGLHLNHTERYEASAEFTHVWRKVLEGETVDFAGKHIQVKGAKLLFPPVQHPRPPLYFGGSSAAAQDLAAEQVELYLTWGEPPEQVKEKIEEVRAKAAAKGRTVRFGIRLHVIVRETTEEAWRAANRLIANLDDKTIADAQQAFAGFDSVGQQRMAALHGGKKDNLEISPNLWAGVGLVRGGAGTALVGDGPTVAQRIQEYADLGIDTFVFSGYPHLEEAYRVSELLFPHLDLATTELPTQRPATQPQGEVVANIYVPQKVSQS</sequence>
<keyword id="KW-0285">Flavoprotein</keyword>
<keyword id="KW-0288">FMN</keyword>
<keyword id="KW-0503">Monooxygenase</keyword>
<keyword id="KW-0560">Oxidoreductase</keyword>
<organism>
    <name type="scientific">Yersinia pestis bv. Antiqua (strain Nepal516)</name>
    <dbReference type="NCBI Taxonomy" id="377628"/>
    <lineage>
        <taxon>Bacteria</taxon>
        <taxon>Pseudomonadati</taxon>
        <taxon>Pseudomonadota</taxon>
        <taxon>Gammaproteobacteria</taxon>
        <taxon>Enterobacterales</taxon>
        <taxon>Yersiniaceae</taxon>
        <taxon>Yersinia</taxon>
    </lineage>
</organism>
<evidence type="ECO:0000255" key="1">
    <source>
        <dbReference type="HAMAP-Rule" id="MF_01229"/>
    </source>
</evidence>
<gene>
    <name evidence="1" type="primary">ssuD</name>
    <name type="ordered locus">YPN_3545</name>
    <name type="ORF">YP516_4031</name>
</gene>
<accession>Q1CDQ8</accession>
<accession>D1Q1N1</accession>
<dbReference type="EC" id="1.14.14.5" evidence="1"/>
<dbReference type="EMBL" id="CP000305">
    <property type="protein sequence ID" value="ABG19872.1"/>
    <property type="molecule type" value="Genomic_DNA"/>
</dbReference>
<dbReference type="EMBL" id="ACNQ01000019">
    <property type="protein sequence ID" value="EEO74434.1"/>
    <property type="molecule type" value="Genomic_DNA"/>
</dbReference>
<dbReference type="RefSeq" id="WP_002210034.1">
    <property type="nucleotide sequence ID" value="NZ_ACNQ01000019.1"/>
</dbReference>
<dbReference type="SMR" id="Q1CDQ8"/>
<dbReference type="GeneID" id="57975051"/>
<dbReference type="KEGG" id="ypn:YPN_3545"/>
<dbReference type="HOGENOM" id="CLU_027853_1_0_6"/>
<dbReference type="Proteomes" id="UP000008936">
    <property type="component" value="Chromosome"/>
</dbReference>
<dbReference type="GO" id="GO:0008726">
    <property type="term" value="F:alkanesulfonate monooxygenase activity"/>
    <property type="evidence" value="ECO:0007669"/>
    <property type="project" value="UniProtKB-UniRule"/>
</dbReference>
<dbReference type="GO" id="GO:0046306">
    <property type="term" value="P:alkanesulfonate catabolic process"/>
    <property type="evidence" value="ECO:0007669"/>
    <property type="project" value="TreeGrafter"/>
</dbReference>
<dbReference type="CDD" id="cd01094">
    <property type="entry name" value="Alkanesulfonate_monoxygenase"/>
    <property type="match status" value="1"/>
</dbReference>
<dbReference type="FunFam" id="3.20.20.30:FF:000001">
    <property type="entry name" value="Alkanesulfonate monooxygenase"/>
    <property type="match status" value="1"/>
</dbReference>
<dbReference type="Gene3D" id="3.20.20.30">
    <property type="entry name" value="Luciferase-like domain"/>
    <property type="match status" value="1"/>
</dbReference>
<dbReference type="HAMAP" id="MF_01229">
    <property type="entry name" value="Alkanesulf_monooxygen"/>
    <property type="match status" value="1"/>
</dbReference>
<dbReference type="InterPro" id="IPR019911">
    <property type="entry name" value="Alkanesulphonate_mOase_FMN-dep"/>
</dbReference>
<dbReference type="InterPro" id="IPR011251">
    <property type="entry name" value="Luciferase-like_dom"/>
</dbReference>
<dbReference type="InterPro" id="IPR036661">
    <property type="entry name" value="Luciferase-like_sf"/>
</dbReference>
<dbReference type="InterPro" id="IPR050172">
    <property type="entry name" value="SsuD_RutA_monooxygenase"/>
</dbReference>
<dbReference type="NCBIfam" id="TIGR03565">
    <property type="entry name" value="alk_sulf_monoox"/>
    <property type="match status" value="1"/>
</dbReference>
<dbReference type="NCBIfam" id="NF001939">
    <property type="entry name" value="PRK00719.1"/>
    <property type="match status" value="1"/>
</dbReference>
<dbReference type="PANTHER" id="PTHR42847">
    <property type="entry name" value="ALKANESULFONATE MONOOXYGENASE"/>
    <property type="match status" value="1"/>
</dbReference>
<dbReference type="PANTHER" id="PTHR42847:SF4">
    <property type="entry name" value="ALKANESULFONATE MONOOXYGENASE-RELATED"/>
    <property type="match status" value="1"/>
</dbReference>
<dbReference type="Pfam" id="PF00296">
    <property type="entry name" value="Bac_luciferase"/>
    <property type="match status" value="1"/>
</dbReference>
<dbReference type="SUPFAM" id="SSF51679">
    <property type="entry name" value="Bacterial luciferase-like"/>
    <property type="match status" value="1"/>
</dbReference>
<comment type="function">
    <text evidence="1">Catalyzes the desulfonation of aliphatic sulfonates.</text>
</comment>
<comment type="catalytic activity">
    <reaction evidence="1">
        <text>an alkanesulfonate + FMNH2 + O2 = an aldehyde + FMN + sulfite + H2O + 2 H(+)</text>
        <dbReference type="Rhea" id="RHEA:23064"/>
        <dbReference type="ChEBI" id="CHEBI:15377"/>
        <dbReference type="ChEBI" id="CHEBI:15378"/>
        <dbReference type="ChEBI" id="CHEBI:15379"/>
        <dbReference type="ChEBI" id="CHEBI:17359"/>
        <dbReference type="ChEBI" id="CHEBI:17478"/>
        <dbReference type="ChEBI" id="CHEBI:57618"/>
        <dbReference type="ChEBI" id="CHEBI:58210"/>
        <dbReference type="ChEBI" id="CHEBI:134249"/>
        <dbReference type="EC" id="1.14.14.5"/>
    </reaction>
</comment>
<comment type="subunit">
    <text evidence="1">Homotetramer.</text>
</comment>
<comment type="miscellaneous">
    <text evidence="1">FMNH(2) which is absolutely required for this enzymatic reaction, is provided by SsuE.</text>
</comment>
<comment type="similarity">
    <text evidence="1">Belongs to the SsuD family.</text>
</comment>
<proteinExistence type="inferred from homology"/>
<feature type="chain" id="PRO_1000066839" description="Alkanesulfonate monooxygenase">
    <location>
        <begin position="1"/>
        <end position="382"/>
    </location>
</feature>